<evidence type="ECO:0000255" key="1">
    <source>
        <dbReference type="HAMAP-Rule" id="MF_01815"/>
    </source>
</evidence>
<accession>Q7V3E0</accession>
<reference key="1">
    <citation type="journal article" date="2003" name="Nature">
        <title>Genome divergence in two Prochlorococcus ecotypes reflects oceanic niche differentiation.</title>
        <authorList>
            <person name="Rocap G."/>
            <person name="Larimer F.W."/>
            <person name="Lamerdin J.E."/>
            <person name="Malfatti S."/>
            <person name="Chain P."/>
            <person name="Ahlgren N.A."/>
            <person name="Arellano A."/>
            <person name="Coleman M."/>
            <person name="Hauser L."/>
            <person name="Hess W.R."/>
            <person name="Johnson Z.I."/>
            <person name="Land M.L."/>
            <person name="Lindell D."/>
            <person name="Post A.F."/>
            <person name="Regala W."/>
            <person name="Shah M."/>
            <person name="Shaw S.L."/>
            <person name="Steglich C."/>
            <person name="Sullivan M.B."/>
            <person name="Ting C.S."/>
            <person name="Tolonen A."/>
            <person name="Webb E.A."/>
            <person name="Zinser E.R."/>
            <person name="Chisholm S.W."/>
        </authorList>
    </citation>
    <scope>NUCLEOTIDE SEQUENCE [LARGE SCALE GENOMIC DNA]</scope>
    <source>
        <strain>CCMP1986 / NIES-2087 / MED4</strain>
    </source>
</reference>
<dbReference type="EC" id="2.3.1.180" evidence="1"/>
<dbReference type="EMBL" id="BX548174">
    <property type="protein sequence ID" value="CAE18595.1"/>
    <property type="molecule type" value="Genomic_DNA"/>
</dbReference>
<dbReference type="RefSeq" id="WP_011131775.1">
    <property type="nucleotide sequence ID" value="NC_005072.1"/>
</dbReference>
<dbReference type="SMR" id="Q7V3E0"/>
<dbReference type="STRING" id="59919.PMM0136"/>
<dbReference type="KEGG" id="pmm:PMM0136"/>
<dbReference type="eggNOG" id="COG0332">
    <property type="taxonomic scope" value="Bacteria"/>
</dbReference>
<dbReference type="HOGENOM" id="CLU_039592_0_1_3"/>
<dbReference type="OrthoDB" id="9815506at2"/>
<dbReference type="UniPathway" id="UPA00094"/>
<dbReference type="Proteomes" id="UP000001026">
    <property type="component" value="Chromosome"/>
</dbReference>
<dbReference type="GO" id="GO:0005737">
    <property type="term" value="C:cytoplasm"/>
    <property type="evidence" value="ECO:0007669"/>
    <property type="project" value="UniProtKB-SubCell"/>
</dbReference>
<dbReference type="GO" id="GO:0004315">
    <property type="term" value="F:3-oxoacyl-[acyl-carrier-protein] synthase activity"/>
    <property type="evidence" value="ECO:0007669"/>
    <property type="project" value="InterPro"/>
</dbReference>
<dbReference type="GO" id="GO:0033818">
    <property type="term" value="F:beta-ketoacyl-acyl-carrier-protein synthase III activity"/>
    <property type="evidence" value="ECO:0007669"/>
    <property type="project" value="UniProtKB-UniRule"/>
</dbReference>
<dbReference type="GO" id="GO:0006633">
    <property type="term" value="P:fatty acid biosynthetic process"/>
    <property type="evidence" value="ECO:0007669"/>
    <property type="project" value="UniProtKB-UniRule"/>
</dbReference>
<dbReference type="CDD" id="cd00830">
    <property type="entry name" value="KAS_III"/>
    <property type="match status" value="1"/>
</dbReference>
<dbReference type="FunFam" id="3.40.47.10:FF:000004">
    <property type="entry name" value="3-oxoacyl-[acyl-carrier-protein] synthase 3"/>
    <property type="match status" value="1"/>
</dbReference>
<dbReference type="Gene3D" id="3.40.47.10">
    <property type="match status" value="1"/>
</dbReference>
<dbReference type="HAMAP" id="MF_01815">
    <property type="entry name" value="FabH"/>
    <property type="match status" value="1"/>
</dbReference>
<dbReference type="InterPro" id="IPR013747">
    <property type="entry name" value="ACP_syn_III_C"/>
</dbReference>
<dbReference type="InterPro" id="IPR013751">
    <property type="entry name" value="ACP_syn_III_N"/>
</dbReference>
<dbReference type="InterPro" id="IPR004655">
    <property type="entry name" value="FabH"/>
</dbReference>
<dbReference type="InterPro" id="IPR016039">
    <property type="entry name" value="Thiolase-like"/>
</dbReference>
<dbReference type="NCBIfam" id="TIGR00747">
    <property type="entry name" value="fabH"/>
    <property type="match status" value="1"/>
</dbReference>
<dbReference type="NCBIfam" id="NF006829">
    <property type="entry name" value="PRK09352.1"/>
    <property type="match status" value="1"/>
</dbReference>
<dbReference type="PANTHER" id="PTHR43091">
    <property type="entry name" value="3-OXOACYL-[ACYL-CARRIER-PROTEIN] SYNTHASE"/>
    <property type="match status" value="1"/>
</dbReference>
<dbReference type="PANTHER" id="PTHR43091:SF1">
    <property type="entry name" value="BETA-KETOACYL-[ACYL-CARRIER-PROTEIN] SYNTHASE III, CHLOROPLASTIC"/>
    <property type="match status" value="1"/>
</dbReference>
<dbReference type="Pfam" id="PF08545">
    <property type="entry name" value="ACP_syn_III"/>
    <property type="match status" value="1"/>
</dbReference>
<dbReference type="Pfam" id="PF08541">
    <property type="entry name" value="ACP_syn_III_C"/>
    <property type="match status" value="1"/>
</dbReference>
<dbReference type="SUPFAM" id="SSF53901">
    <property type="entry name" value="Thiolase-like"/>
    <property type="match status" value="1"/>
</dbReference>
<proteinExistence type="inferred from homology"/>
<comment type="function">
    <text evidence="1">Catalyzes the condensation reaction of fatty acid synthesis by the addition to an acyl acceptor of two carbons from malonyl-ACP. Catalyzes the first condensation reaction which initiates fatty acid synthesis and may therefore play a role in governing the total rate of fatty acid production. Possesses both acetoacetyl-ACP synthase and acetyl transacylase activities. Its substrate specificity determines the biosynthesis of branched-chain and/or straight-chain of fatty acids.</text>
</comment>
<comment type="catalytic activity">
    <reaction evidence="1">
        <text>malonyl-[ACP] + acetyl-CoA + H(+) = 3-oxobutanoyl-[ACP] + CO2 + CoA</text>
        <dbReference type="Rhea" id="RHEA:12080"/>
        <dbReference type="Rhea" id="RHEA-COMP:9623"/>
        <dbReference type="Rhea" id="RHEA-COMP:9625"/>
        <dbReference type="ChEBI" id="CHEBI:15378"/>
        <dbReference type="ChEBI" id="CHEBI:16526"/>
        <dbReference type="ChEBI" id="CHEBI:57287"/>
        <dbReference type="ChEBI" id="CHEBI:57288"/>
        <dbReference type="ChEBI" id="CHEBI:78449"/>
        <dbReference type="ChEBI" id="CHEBI:78450"/>
        <dbReference type="EC" id="2.3.1.180"/>
    </reaction>
</comment>
<comment type="pathway">
    <text evidence="1">Lipid metabolism; fatty acid biosynthesis.</text>
</comment>
<comment type="subunit">
    <text evidence="1">Homodimer.</text>
</comment>
<comment type="subcellular location">
    <subcellularLocation>
        <location evidence="1">Cytoplasm</location>
    </subcellularLocation>
</comment>
<comment type="domain">
    <text evidence="1">The last Arg residue of the ACP-binding site is essential for the weak association between ACP/AcpP and FabH.</text>
</comment>
<comment type="similarity">
    <text evidence="1">Belongs to the thiolase-like superfamily. FabH family.</text>
</comment>
<gene>
    <name evidence="1" type="primary">fabH</name>
    <name type="ordered locus">PMM0136</name>
</gene>
<keyword id="KW-0012">Acyltransferase</keyword>
<keyword id="KW-0963">Cytoplasm</keyword>
<keyword id="KW-0275">Fatty acid biosynthesis</keyword>
<keyword id="KW-0276">Fatty acid metabolism</keyword>
<keyword id="KW-0444">Lipid biosynthesis</keyword>
<keyword id="KW-0443">Lipid metabolism</keyword>
<keyword id="KW-0511">Multifunctional enzyme</keyword>
<keyword id="KW-0808">Transferase</keyword>
<organism>
    <name type="scientific">Prochlorococcus marinus subsp. pastoris (strain CCMP1986 / NIES-2087 / MED4)</name>
    <dbReference type="NCBI Taxonomy" id="59919"/>
    <lineage>
        <taxon>Bacteria</taxon>
        <taxon>Bacillati</taxon>
        <taxon>Cyanobacteriota</taxon>
        <taxon>Cyanophyceae</taxon>
        <taxon>Synechococcales</taxon>
        <taxon>Prochlorococcaceae</taxon>
        <taxon>Prochlorococcus</taxon>
    </lineage>
</organism>
<name>FABH_PROMP</name>
<feature type="chain" id="PRO_0000110454" description="Beta-ketoacyl-[acyl-carrier-protein] synthase III">
    <location>
        <begin position="1"/>
        <end position="335"/>
    </location>
</feature>
<feature type="region of interest" description="ACP-binding" evidence="1">
    <location>
        <begin position="262"/>
        <end position="266"/>
    </location>
</feature>
<feature type="active site" evidence="1">
    <location>
        <position position="119"/>
    </location>
</feature>
<feature type="active site" evidence="1">
    <location>
        <position position="261"/>
    </location>
</feature>
<feature type="active site" evidence="1">
    <location>
        <position position="291"/>
    </location>
</feature>
<sequence length="335" mass="36465">MEGINLNQIGVSFKGSGSYVPNQILTNQEISKKVETSDEWIKSRTGISQRRISGLSENVSEMGYKAALGAIEMARWDIETIDLIILATSTPNDLFGSAPEIQSKLGAINAVAFDLTAACSGFLFAAITATQFLKAGSYKRAVVIGSDQLSSYVDWNDRRSCILFGDGAGAIAIEGTNELDNLLGFSMRTDGQRGSFLNLPSQNNQDLIINDINFSSGGFSSIKMNGQEVYKFAVREVPLIIDNLFKKTNFNSEKINWLLLHQANQRILDSVGERLNVSTEKILSNLSNYGNTSAATIPLMLDEAIRNKKIKENDIIATSGFGAGLSWGAALIRWG</sequence>
<protein>
    <recommendedName>
        <fullName evidence="1">Beta-ketoacyl-[acyl-carrier-protein] synthase III</fullName>
        <shortName evidence="1">Beta-ketoacyl-ACP synthase III</shortName>
        <shortName evidence="1">KAS III</shortName>
        <ecNumber evidence="1">2.3.1.180</ecNumber>
    </recommendedName>
    <alternativeName>
        <fullName evidence="1">3-oxoacyl-[acyl-carrier-protein] synthase 3</fullName>
    </alternativeName>
    <alternativeName>
        <fullName evidence="1">3-oxoacyl-[acyl-carrier-protein] synthase III</fullName>
    </alternativeName>
</protein>